<sequence>MGSSAKKKKEKKKDFQKTKLKVGKTKAKPDNFTDTSFRAKTITLNQQSLHITAPSSDAQFTHHVSLLSSKSDTQRRDSLAHLTTSLVSRPVDSPLPQPVSVLLPTLLPLILDASSSVRTQLLKLLRALPANDIQDHVPQLLPYIRAGMTHLAADIRVSAVEVLSWLVDVAGAEVVSCAGGWIKTLNCFLSVLGWHTEESSKWSGNRASFGKSGAKGQPMVKVLAALAVFLQAGIGRPDERMDDSSDEDSAPGVSGWEFPLCHAAQHMVPQATAPFVHLNLFGQPRDEEGEMYETREDRYRVFENRFLGAVQRGLESARGEGGEVGRASAGVSKVLKEAIAYGPGV</sequence>
<accession>Q4WCP8</accession>
<proteinExistence type="inferred from homology"/>
<evidence type="ECO:0000250" key="1">
    <source>
        <dbReference type="UniProtKB" id="P38803"/>
    </source>
</evidence>
<evidence type="ECO:0000256" key="2">
    <source>
        <dbReference type="SAM" id="MobiDB-lite"/>
    </source>
</evidence>
<evidence type="ECO:0000305" key="3"/>
<keyword id="KW-0539">Nucleus</keyword>
<keyword id="KW-1185">Reference proteome</keyword>
<keyword id="KW-0690">Ribosome biogenesis</keyword>
<keyword id="KW-0698">rRNA processing</keyword>
<comment type="function">
    <text evidence="1">Component of the RIX1 complex required for processing of ITS2 sequences from 35S pre-rRNA.</text>
</comment>
<comment type="subunit">
    <text evidence="1">Component of the RIX1 complex, composed of ipi1, rix1/ipi2 and ipi3 in a 1:2:2 stoichiometry. The complex interacts (via rix1) with mdn1 (via its hexameric AAA ATPase ring) and the pre-60S ribosome particles.</text>
</comment>
<comment type="subcellular location">
    <subcellularLocation>
        <location evidence="1">Nucleus</location>
    </subcellularLocation>
</comment>
<comment type="similarity">
    <text evidence="3">Belongs to the IPI1/TEX10 family.</text>
</comment>
<comment type="sequence caution" evidence="3">
    <conflict type="erroneous gene model prediction">
        <sequence resource="EMBL-CDS" id="EAL85840"/>
    </conflict>
</comment>
<dbReference type="EMBL" id="AAHF01000012">
    <property type="protein sequence ID" value="EAL85840.1"/>
    <property type="status" value="ALT_SEQ"/>
    <property type="molecule type" value="Genomic_DNA"/>
</dbReference>
<dbReference type="RefSeq" id="XP_747878.1">
    <property type="nucleotide sequence ID" value="XM_742785.1"/>
</dbReference>
<dbReference type="SMR" id="Q4WCP8"/>
<dbReference type="FunCoup" id="Q4WCP8">
    <property type="interactions" value="220"/>
</dbReference>
<dbReference type="STRING" id="330879.Q4WCP8"/>
<dbReference type="GeneID" id="3505330"/>
<dbReference type="KEGG" id="afm:AFUA_6G01990"/>
<dbReference type="VEuPathDB" id="FungiDB:Afu6g01990"/>
<dbReference type="eggNOG" id="KOG2149">
    <property type="taxonomic scope" value="Eukaryota"/>
</dbReference>
<dbReference type="HOGENOM" id="CLU_050252_2_0_1"/>
<dbReference type="InParanoid" id="Q4WCP8"/>
<dbReference type="OrthoDB" id="361362at2759"/>
<dbReference type="Proteomes" id="UP000002530">
    <property type="component" value="Chromosome 6"/>
</dbReference>
<dbReference type="GO" id="GO:0005634">
    <property type="term" value="C:nucleus"/>
    <property type="evidence" value="ECO:0000318"/>
    <property type="project" value="GO_Central"/>
</dbReference>
<dbReference type="GO" id="GO:0120330">
    <property type="term" value="C:rixosome complex"/>
    <property type="evidence" value="ECO:0000318"/>
    <property type="project" value="GO_Central"/>
</dbReference>
<dbReference type="GO" id="GO:0006364">
    <property type="term" value="P:rRNA processing"/>
    <property type="evidence" value="ECO:0000318"/>
    <property type="project" value="GO_Central"/>
</dbReference>
<dbReference type="FunFam" id="1.25.10.10:FF:001012">
    <property type="entry name" value="Pre-rRNA-processing protein ipi1"/>
    <property type="match status" value="1"/>
</dbReference>
<dbReference type="Gene3D" id="1.25.10.10">
    <property type="entry name" value="Leucine-rich Repeat Variant"/>
    <property type="match status" value="1"/>
</dbReference>
<dbReference type="InterPro" id="IPR011989">
    <property type="entry name" value="ARM-like"/>
</dbReference>
<dbReference type="InterPro" id="IPR016024">
    <property type="entry name" value="ARM-type_fold"/>
</dbReference>
<dbReference type="InterPro" id="IPR024679">
    <property type="entry name" value="Ipi1_N"/>
</dbReference>
<dbReference type="PANTHER" id="PTHR16056">
    <property type="entry name" value="REGULATOR OF MICROTUBULE DYNAMICS PROTEIN"/>
    <property type="match status" value="1"/>
</dbReference>
<dbReference type="PANTHER" id="PTHR16056:SF2">
    <property type="entry name" value="TESTIS-EXPRESSED PROTEIN 10"/>
    <property type="match status" value="1"/>
</dbReference>
<dbReference type="Pfam" id="PF12333">
    <property type="entry name" value="Ipi1_N"/>
    <property type="match status" value="1"/>
</dbReference>
<dbReference type="SUPFAM" id="SSF48371">
    <property type="entry name" value="ARM repeat"/>
    <property type="match status" value="1"/>
</dbReference>
<organism>
    <name type="scientific">Aspergillus fumigatus (strain ATCC MYA-4609 / CBS 101355 / FGSC A1100 / Af293)</name>
    <name type="common">Neosartorya fumigata</name>
    <dbReference type="NCBI Taxonomy" id="330879"/>
    <lineage>
        <taxon>Eukaryota</taxon>
        <taxon>Fungi</taxon>
        <taxon>Dikarya</taxon>
        <taxon>Ascomycota</taxon>
        <taxon>Pezizomycotina</taxon>
        <taxon>Eurotiomycetes</taxon>
        <taxon>Eurotiomycetidae</taxon>
        <taxon>Eurotiales</taxon>
        <taxon>Aspergillaceae</taxon>
        <taxon>Aspergillus</taxon>
        <taxon>Aspergillus subgen. Fumigati</taxon>
    </lineage>
</organism>
<protein>
    <recommendedName>
        <fullName>Pre-rRNA-processing protein ipi1</fullName>
    </recommendedName>
</protein>
<gene>
    <name type="primary">ipi1</name>
    <name type="ORF">AFUA_6G01990</name>
</gene>
<name>IPI1_ASPFU</name>
<reference key="1">
    <citation type="journal article" date="2005" name="Nature">
        <title>Genomic sequence of the pathogenic and allergenic filamentous fungus Aspergillus fumigatus.</title>
        <authorList>
            <person name="Nierman W.C."/>
            <person name="Pain A."/>
            <person name="Anderson M.J."/>
            <person name="Wortman J.R."/>
            <person name="Kim H.S."/>
            <person name="Arroyo J."/>
            <person name="Berriman M."/>
            <person name="Abe K."/>
            <person name="Archer D.B."/>
            <person name="Bermejo C."/>
            <person name="Bennett J.W."/>
            <person name="Bowyer P."/>
            <person name="Chen D."/>
            <person name="Collins M."/>
            <person name="Coulsen R."/>
            <person name="Davies R."/>
            <person name="Dyer P.S."/>
            <person name="Farman M.L."/>
            <person name="Fedorova N."/>
            <person name="Fedorova N.D."/>
            <person name="Feldblyum T.V."/>
            <person name="Fischer R."/>
            <person name="Fosker N."/>
            <person name="Fraser A."/>
            <person name="Garcia J.L."/>
            <person name="Garcia M.J."/>
            <person name="Goble A."/>
            <person name="Goldman G.H."/>
            <person name="Gomi K."/>
            <person name="Griffith-Jones S."/>
            <person name="Gwilliam R."/>
            <person name="Haas B.J."/>
            <person name="Haas H."/>
            <person name="Harris D.E."/>
            <person name="Horiuchi H."/>
            <person name="Huang J."/>
            <person name="Humphray S."/>
            <person name="Jimenez J."/>
            <person name="Keller N."/>
            <person name="Khouri H."/>
            <person name="Kitamoto K."/>
            <person name="Kobayashi T."/>
            <person name="Konzack S."/>
            <person name="Kulkarni R."/>
            <person name="Kumagai T."/>
            <person name="Lafton A."/>
            <person name="Latge J.-P."/>
            <person name="Li W."/>
            <person name="Lord A."/>
            <person name="Lu C."/>
            <person name="Majoros W.H."/>
            <person name="May G.S."/>
            <person name="Miller B.L."/>
            <person name="Mohamoud Y."/>
            <person name="Molina M."/>
            <person name="Monod M."/>
            <person name="Mouyna I."/>
            <person name="Mulligan S."/>
            <person name="Murphy L.D."/>
            <person name="O'Neil S."/>
            <person name="Paulsen I."/>
            <person name="Penalva M.A."/>
            <person name="Pertea M."/>
            <person name="Price C."/>
            <person name="Pritchard B.L."/>
            <person name="Quail M.A."/>
            <person name="Rabbinowitsch E."/>
            <person name="Rawlins N."/>
            <person name="Rajandream M.A."/>
            <person name="Reichard U."/>
            <person name="Renauld H."/>
            <person name="Robson G.D."/>
            <person name="Rodriguez de Cordoba S."/>
            <person name="Rodriguez-Pena J.M."/>
            <person name="Ronning C.M."/>
            <person name="Rutter S."/>
            <person name="Salzberg S.L."/>
            <person name="Sanchez M."/>
            <person name="Sanchez-Ferrero J.C."/>
            <person name="Saunders D."/>
            <person name="Seeger K."/>
            <person name="Squares R."/>
            <person name="Squares S."/>
            <person name="Takeuchi M."/>
            <person name="Tekaia F."/>
            <person name="Turner G."/>
            <person name="Vazquez de Aldana C.R."/>
            <person name="Weidman J."/>
            <person name="White O."/>
            <person name="Woodward J.R."/>
            <person name="Yu J.-H."/>
            <person name="Fraser C.M."/>
            <person name="Galagan J.E."/>
            <person name="Asai K."/>
            <person name="Machida M."/>
            <person name="Hall N."/>
            <person name="Barrell B.G."/>
            <person name="Denning D.W."/>
        </authorList>
    </citation>
    <scope>NUCLEOTIDE SEQUENCE [LARGE SCALE GENOMIC DNA]</scope>
    <source>
        <strain>ATCC MYA-4609 / CBS 101355 / FGSC A1100 / Af293</strain>
    </source>
</reference>
<feature type="chain" id="PRO_0000308714" description="Pre-rRNA-processing protein ipi1">
    <location>
        <begin position="1"/>
        <end position="345"/>
    </location>
</feature>
<feature type="region of interest" description="Disordered" evidence="2">
    <location>
        <begin position="1"/>
        <end position="30"/>
    </location>
</feature>
<feature type="compositionally biased region" description="Basic residues" evidence="2">
    <location>
        <begin position="1"/>
        <end position="11"/>
    </location>
</feature>